<organism>
    <name type="scientific">Frankia alni (strain DSM 45986 / CECT 9034 / ACN14a)</name>
    <dbReference type="NCBI Taxonomy" id="326424"/>
    <lineage>
        <taxon>Bacteria</taxon>
        <taxon>Bacillati</taxon>
        <taxon>Actinomycetota</taxon>
        <taxon>Actinomycetes</taxon>
        <taxon>Frankiales</taxon>
        <taxon>Frankiaceae</taxon>
        <taxon>Frankia</taxon>
    </lineage>
</organism>
<gene>
    <name evidence="1" type="primary">atpH</name>
    <name type="ordered locus">FRAAL5934</name>
</gene>
<protein>
    <recommendedName>
        <fullName evidence="1">ATP synthase subunit delta</fullName>
    </recommendedName>
    <alternativeName>
        <fullName evidence="1">ATP synthase F(1) sector subunit delta</fullName>
    </alternativeName>
    <alternativeName>
        <fullName evidence="1">F-type ATPase subunit delta</fullName>
        <shortName evidence="1">F-ATPase subunit delta</shortName>
    </alternativeName>
</protein>
<feature type="chain" id="PRO_0000370983" description="ATP synthase subunit delta">
    <location>
        <begin position="1"/>
        <end position="277"/>
    </location>
</feature>
<dbReference type="EMBL" id="CT573213">
    <property type="protein sequence ID" value="CAJ64559.1"/>
    <property type="molecule type" value="Genomic_DNA"/>
</dbReference>
<dbReference type="RefSeq" id="WP_011606994.1">
    <property type="nucleotide sequence ID" value="NC_008278.1"/>
</dbReference>
<dbReference type="SMR" id="Q0RDB1"/>
<dbReference type="STRING" id="326424.FRAAL5934"/>
<dbReference type="KEGG" id="fal:FRAAL5934"/>
<dbReference type="eggNOG" id="COG0712">
    <property type="taxonomic scope" value="Bacteria"/>
</dbReference>
<dbReference type="HOGENOM" id="CLU_088880_0_0_11"/>
<dbReference type="OrthoDB" id="5242917at2"/>
<dbReference type="Proteomes" id="UP000000657">
    <property type="component" value="Chromosome"/>
</dbReference>
<dbReference type="GO" id="GO:0005886">
    <property type="term" value="C:plasma membrane"/>
    <property type="evidence" value="ECO:0007669"/>
    <property type="project" value="UniProtKB-SubCell"/>
</dbReference>
<dbReference type="GO" id="GO:0045259">
    <property type="term" value="C:proton-transporting ATP synthase complex"/>
    <property type="evidence" value="ECO:0007669"/>
    <property type="project" value="UniProtKB-KW"/>
</dbReference>
<dbReference type="GO" id="GO:0046933">
    <property type="term" value="F:proton-transporting ATP synthase activity, rotational mechanism"/>
    <property type="evidence" value="ECO:0007669"/>
    <property type="project" value="UniProtKB-UniRule"/>
</dbReference>
<dbReference type="Gene3D" id="1.10.520.20">
    <property type="entry name" value="N-terminal domain of the delta subunit of the F1F0-ATP synthase"/>
    <property type="match status" value="1"/>
</dbReference>
<dbReference type="HAMAP" id="MF_01416">
    <property type="entry name" value="ATP_synth_delta_bact"/>
    <property type="match status" value="1"/>
</dbReference>
<dbReference type="InterPro" id="IPR026015">
    <property type="entry name" value="ATP_synth_OSCP/delta_N_sf"/>
</dbReference>
<dbReference type="InterPro" id="IPR020781">
    <property type="entry name" value="ATPase_OSCP/d_CS"/>
</dbReference>
<dbReference type="InterPro" id="IPR000711">
    <property type="entry name" value="ATPase_OSCP/dsu"/>
</dbReference>
<dbReference type="NCBIfam" id="TIGR01145">
    <property type="entry name" value="ATP_synt_delta"/>
    <property type="match status" value="1"/>
</dbReference>
<dbReference type="NCBIfam" id="NF009967">
    <property type="entry name" value="PRK13430.1"/>
    <property type="match status" value="1"/>
</dbReference>
<dbReference type="PANTHER" id="PTHR11910">
    <property type="entry name" value="ATP SYNTHASE DELTA CHAIN"/>
    <property type="match status" value="1"/>
</dbReference>
<dbReference type="Pfam" id="PF00213">
    <property type="entry name" value="OSCP"/>
    <property type="match status" value="1"/>
</dbReference>
<dbReference type="SUPFAM" id="SSF47928">
    <property type="entry name" value="N-terminal domain of the delta subunit of the F1F0-ATP synthase"/>
    <property type="match status" value="1"/>
</dbReference>
<dbReference type="PROSITE" id="PS00389">
    <property type="entry name" value="ATPASE_DELTA"/>
    <property type="match status" value="1"/>
</dbReference>
<accession>Q0RDB1</accession>
<name>ATPD_FRAAA</name>
<proteinExistence type="inferred from homology"/>
<keyword id="KW-0066">ATP synthesis</keyword>
<keyword id="KW-1003">Cell membrane</keyword>
<keyword id="KW-0139">CF(1)</keyword>
<keyword id="KW-0375">Hydrogen ion transport</keyword>
<keyword id="KW-0406">Ion transport</keyword>
<keyword id="KW-0472">Membrane</keyword>
<keyword id="KW-1185">Reference proteome</keyword>
<keyword id="KW-0813">Transport</keyword>
<evidence type="ECO:0000255" key="1">
    <source>
        <dbReference type="HAMAP-Rule" id="MF_01416"/>
    </source>
</evidence>
<sequence>MEGASRHGLATARATLDEATAIPPGAAVTSVDASRVADDLRAVADLLHREPTVRRALTDPGAPPAARTELAARLLGRQLDAVSLRIVQTAVSSRWSRPADLQFALLELSVEALLVEAERDGALEEVEDELFRFARILGQNPQLALALTDPAAPASVKNALLGRLLSGRAHPVTLRLAQQAAADRIHGDVERRLADFSRIAAARRGRVVAVVRTAVPLTDEVIARLGAAISRYFGRQIQLQVDLDPELLGGVVVKVGDEVVDGSVLRRLAAARRALLR</sequence>
<reference key="1">
    <citation type="journal article" date="2007" name="Genome Res.">
        <title>Genome characteristics of facultatively symbiotic Frankia sp. strains reflect host range and host plant biogeography.</title>
        <authorList>
            <person name="Normand P."/>
            <person name="Lapierre P."/>
            <person name="Tisa L.S."/>
            <person name="Gogarten J.P."/>
            <person name="Alloisio N."/>
            <person name="Bagnarol E."/>
            <person name="Bassi C.A."/>
            <person name="Berry A.M."/>
            <person name="Bickhart D.M."/>
            <person name="Choisne N."/>
            <person name="Couloux A."/>
            <person name="Cournoyer B."/>
            <person name="Cruveiller S."/>
            <person name="Daubin V."/>
            <person name="Demange N."/>
            <person name="Francino M.P."/>
            <person name="Goltsman E."/>
            <person name="Huang Y."/>
            <person name="Kopp O.R."/>
            <person name="Labarre L."/>
            <person name="Lapidus A."/>
            <person name="Lavire C."/>
            <person name="Marechal J."/>
            <person name="Martinez M."/>
            <person name="Mastronunzio J.E."/>
            <person name="Mullin B.C."/>
            <person name="Niemann J."/>
            <person name="Pujic P."/>
            <person name="Rawnsley T."/>
            <person name="Rouy Z."/>
            <person name="Schenowitz C."/>
            <person name="Sellstedt A."/>
            <person name="Tavares F."/>
            <person name="Tomkins J.P."/>
            <person name="Vallenet D."/>
            <person name="Valverde C."/>
            <person name="Wall L.G."/>
            <person name="Wang Y."/>
            <person name="Medigue C."/>
            <person name="Benson D.R."/>
        </authorList>
    </citation>
    <scope>NUCLEOTIDE SEQUENCE [LARGE SCALE GENOMIC DNA]</scope>
    <source>
        <strain>DSM 45986 / CECT 9034 / ACN14a</strain>
    </source>
</reference>
<comment type="function">
    <text evidence="1">F(1)F(0) ATP synthase produces ATP from ADP in the presence of a proton or sodium gradient. F-type ATPases consist of two structural domains, F(1) containing the extramembraneous catalytic core and F(0) containing the membrane proton channel, linked together by a central stalk and a peripheral stalk. During catalysis, ATP synthesis in the catalytic domain of F(1) is coupled via a rotary mechanism of the central stalk subunits to proton translocation.</text>
</comment>
<comment type="function">
    <text evidence="1">This protein is part of the stalk that links CF(0) to CF(1). It either transmits conformational changes from CF(0) to CF(1) or is implicated in proton conduction.</text>
</comment>
<comment type="subunit">
    <text evidence="1">F-type ATPases have 2 components, F(1) - the catalytic core - and F(0) - the membrane proton channel. F(1) has five subunits: alpha(3), beta(3), gamma(1), delta(1), epsilon(1). F(0) has three main subunits: a(1), b(2) and c(10-14). The alpha and beta chains form an alternating ring which encloses part of the gamma chain. F(1) is attached to F(0) by a central stalk formed by the gamma and epsilon chains, while a peripheral stalk is formed by the delta and b chains.</text>
</comment>
<comment type="subcellular location">
    <subcellularLocation>
        <location evidence="1">Cell membrane</location>
        <topology evidence="1">Peripheral membrane protein</topology>
    </subcellularLocation>
</comment>
<comment type="similarity">
    <text evidence="1">Belongs to the ATPase delta chain family.</text>
</comment>